<sequence length="374" mass="42041">MTDHSNTRVVVGMSGGVDSSVVALLLKQQGYDVVGVFMKNWDDTDENGVCTATEDYKDVAKVADKIGIPYYSINFEKEYWDRVFTYFLDEYKKGRTPNPDVICNKEIKFKAFLDYAMDLGADYIATGHYARLQHDEDGTMHLLRGVDSNKDQTYFLSQLDSKTLQKVMFPLGEMVKPDVRKLALNAGLATAKKKDSVGICFIGEKNFKEFLGHYLPATPGKMMTFDGQVKGEHAGLMYYTIGQRRGLGIGGDGEDNEPWFVVGKDLKKNILYVGKGYHNPHLYATHLKASDLHFVTDEDLGNDFHVTAKFRYRQKDSGVTVHFNDDHTEVTVTFDDPVRAITPGQAVVFYNGEECLGSGMIDAAYNDERVLQYV</sequence>
<evidence type="ECO:0000255" key="1">
    <source>
        <dbReference type="HAMAP-Rule" id="MF_00144"/>
    </source>
</evidence>
<protein>
    <recommendedName>
        <fullName evidence="1">tRNA-specific 2-thiouridylase MnmA</fullName>
        <ecNumber evidence="1">2.8.1.13</ecNumber>
    </recommendedName>
</protein>
<feature type="chain" id="PRO_0000121643" description="tRNA-specific 2-thiouridylase MnmA">
    <location>
        <begin position="1"/>
        <end position="374"/>
    </location>
</feature>
<feature type="region of interest" description="Interaction with target base in tRNA" evidence="1">
    <location>
        <begin position="98"/>
        <end position="100"/>
    </location>
</feature>
<feature type="region of interest" description="Interaction with tRNA" evidence="1">
    <location>
        <begin position="150"/>
        <end position="152"/>
    </location>
</feature>
<feature type="region of interest" description="Interaction with tRNA" evidence="1">
    <location>
        <begin position="311"/>
        <end position="312"/>
    </location>
</feature>
<feature type="active site" description="Nucleophile" evidence="1">
    <location>
        <position position="103"/>
    </location>
</feature>
<feature type="active site" description="Cysteine persulfide intermediate" evidence="1">
    <location>
        <position position="200"/>
    </location>
</feature>
<feature type="binding site" evidence="1">
    <location>
        <begin position="12"/>
        <end position="19"/>
    </location>
    <ligand>
        <name>ATP</name>
        <dbReference type="ChEBI" id="CHEBI:30616"/>
    </ligand>
</feature>
<feature type="binding site" evidence="1">
    <location>
        <position position="38"/>
    </location>
    <ligand>
        <name>ATP</name>
        <dbReference type="ChEBI" id="CHEBI:30616"/>
    </ligand>
</feature>
<feature type="binding site" evidence="1">
    <location>
        <position position="127"/>
    </location>
    <ligand>
        <name>ATP</name>
        <dbReference type="ChEBI" id="CHEBI:30616"/>
    </ligand>
</feature>
<feature type="site" description="Interaction with tRNA" evidence="1">
    <location>
        <position position="128"/>
    </location>
</feature>
<feature type="site" description="Interaction with tRNA" evidence="1">
    <location>
        <position position="345"/>
    </location>
</feature>
<feature type="disulfide bond" description="Alternate" evidence="1">
    <location>
        <begin position="103"/>
        <end position="200"/>
    </location>
</feature>
<gene>
    <name evidence="1" type="primary">mnmA</name>
    <name type="synonym">trmU</name>
    <name type="ordered locus">lp_2178</name>
</gene>
<organism>
    <name type="scientific">Lactiplantibacillus plantarum (strain ATCC BAA-793 / NCIMB 8826 / WCFS1)</name>
    <name type="common">Lactobacillus plantarum</name>
    <dbReference type="NCBI Taxonomy" id="220668"/>
    <lineage>
        <taxon>Bacteria</taxon>
        <taxon>Bacillati</taxon>
        <taxon>Bacillota</taxon>
        <taxon>Bacilli</taxon>
        <taxon>Lactobacillales</taxon>
        <taxon>Lactobacillaceae</taxon>
        <taxon>Lactiplantibacillus</taxon>
    </lineage>
</organism>
<comment type="function">
    <text evidence="1">Catalyzes the 2-thiolation of uridine at the wobble position (U34) of tRNA, leading to the formation of s(2)U34.</text>
</comment>
<comment type="catalytic activity">
    <reaction evidence="1">
        <text>S-sulfanyl-L-cysteinyl-[protein] + uridine(34) in tRNA + AH2 + ATP = 2-thiouridine(34) in tRNA + L-cysteinyl-[protein] + A + AMP + diphosphate + H(+)</text>
        <dbReference type="Rhea" id="RHEA:47032"/>
        <dbReference type="Rhea" id="RHEA-COMP:10131"/>
        <dbReference type="Rhea" id="RHEA-COMP:11726"/>
        <dbReference type="Rhea" id="RHEA-COMP:11727"/>
        <dbReference type="Rhea" id="RHEA-COMP:11728"/>
        <dbReference type="ChEBI" id="CHEBI:13193"/>
        <dbReference type="ChEBI" id="CHEBI:15378"/>
        <dbReference type="ChEBI" id="CHEBI:17499"/>
        <dbReference type="ChEBI" id="CHEBI:29950"/>
        <dbReference type="ChEBI" id="CHEBI:30616"/>
        <dbReference type="ChEBI" id="CHEBI:33019"/>
        <dbReference type="ChEBI" id="CHEBI:61963"/>
        <dbReference type="ChEBI" id="CHEBI:65315"/>
        <dbReference type="ChEBI" id="CHEBI:87170"/>
        <dbReference type="ChEBI" id="CHEBI:456215"/>
        <dbReference type="EC" id="2.8.1.13"/>
    </reaction>
</comment>
<comment type="subcellular location">
    <subcellularLocation>
        <location evidence="1">Cytoplasm</location>
    </subcellularLocation>
</comment>
<comment type="similarity">
    <text evidence="1">Belongs to the MnmA/TRMU family.</text>
</comment>
<proteinExistence type="inferred from homology"/>
<reference key="1">
    <citation type="journal article" date="2003" name="Proc. Natl. Acad. Sci. U.S.A.">
        <title>Complete genome sequence of Lactobacillus plantarum WCFS1.</title>
        <authorList>
            <person name="Kleerebezem M."/>
            <person name="Boekhorst J."/>
            <person name="van Kranenburg R."/>
            <person name="Molenaar D."/>
            <person name="Kuipers O.P."/>
            <person name="Leer R."/>
            <person name="Tarchini R."/>
            <person name="Peters S.A."/>
            <person name="Sandbrink H.M."/>
            <person name="Fiers M.W.E.J."/>
            <person name="Stiekema W."/>
            <person name="Klein Lankhorst R.M."/>
            <person name="Bron P.A."/>
            <person name="Hoffer S.M."/>
            <person name="Nierop Groot M.N."/>
            <person name="Kerkhoven R."/>
            <person name="De Vries M."/>
            <person name="Ursing B."/>
            <person name="De Vos W.M."/>
            <person name="Siezen R.J."/>
        </authorList>
    </citation>
    <scope>NUCLEOTIDE SEQUENCE [LARGE SCALE GENOMIC DNA]</scope>
    <source>
        <strain>ATCC BAA-793 / NCIMB 8826 / WCFS1</strain>
    </source>
</reference>
<reference key="2">
    <citation type="journal article" date="2012" name="J. Bacteriol.">
        <title>Complete resequencing and reannotation of the Lactobacillus plantarum WCFS1 genome.</title>
        <authorList>
            <person name="Siezen R.J."/>
            <person name="Francke C."/>
            <person name="Renckens B."/>
            <person name="Boekhorst J."/>
            <person name="Wels M."/>
            <person name="Kleerebezem M."/>
            <person name="van Hijum S.A."/>
        </authorList>
    </citation>
    <scope>NUCLEOTIDE SEQUENCE [LARGE SCALE GENOMIC DNA]</scope>
    <scope>GENOME REANNOTATION</scope>
    <source>
        <strain>ATCC BAA-793 / NCIMB 8826 / WCFS1</strain>
    </source>
</reference>
<name>MNMA_LACPL</name>
<accession>Q88V96</accession>
<accession>F9UQB1</accession>
<keyword id="KW-0067">ATP-binding</keyword>
<keyword id="KW-0963">Cytoplasm</keyword>
<keyword id="KW-1015">Disulfide bond</keyword>
<keyword id="KW-0547">Nucleotide-binding</keyword>
<keyword id="KW-1185">Reference proteome</keyword>
<keyword id="KW-0694">RNA-binding</keyword>
<keyword id="KW-0808">Transferase</keyword>
<keyword id="KW-0819">tRNA processing</keyword>
<keyword id="KW-0820">tRNA-binding</keyword>
<dbReference type="EC" id="2.8.1.13" evidence="1"/>
<dbReference type="EMBL" id="AL935263">
    <property type="protein sequence ID" value="CCC79400.1"/>
    <property type="molecule type" value="Genomic_DNA"/>
</dbReference>
<dbReference type="RefSeq" id="YP_004889914.1">
    <property type="nucleotide sequence ID" value="NC_004567.2"/>
</dbReference>
<dbReference type="SMR" id="Q88V96"/>
<dbReference type="STRING" id="220668.lp_2178"/>
<dbReference type="EnsemblBacteria" id="CCC79400">
    <property type="protein sequence ID" value="CCC79400"/>
    <property type="gene ID" value="lp_2178"/>
</dbReference>
<dbReference type="KEGG" id="lpl:lp_2178"/>
<dbReference type="PATRIC" id="fig|220668.9.peg.1841"/>
<dbReference type="eggNOG" id="COG0482">
    <property type="taxonomic scope" value="Bacteria"/>
</dbReference>
<dbReference type="HOGENOM" id="CLU_035188_1_0_9"/>
<dbReference type="OrthoDB" id="9800696at2"/>
<dbReference type="PhylomeDB" id="Q88V96"/>
<dbReference type="Proteomes" id="UP000000432">
    <property type="component" value="Chromosome"/>
</dbReference>
<dbReference type="GO" id="GO:0005737">
    <property type="term" value="C:cytoplasm"/>
    <property type="evidence" value="ECO:0007669"/>
    <property type="project" value="UniProtKB-SubCell"/>
</dbReference>
<dbReference type="GO" id="GO:0005524">
    <property type="term" value="F:ATP binding"/>
    <property type="evidence" value="ECO:0007669"/>
    <property type="project" value="UniProtKB-KW"/>
</dbReference>
<dbReference type="GO" id="GO:0000049">
    <property type="term" value="F:tRNA binding"/>
    <property type="evidence" value="ECO:0007669"/>
    <property type="project" value="UniProtKB-KW"/>
</dbReference>
<dbReference type="GO" id="GO:0103016">
    <property type="term" value="F:tRNA-uridine 2-sulfurtransferase activity"/>
    <property type="evidence" value="ECO:0007669"/>
    <property type="project" value="UniProtKB-EC"/>
</dbReference>
<dbReference type="GO" id="GO:0002143">
    <property type="term" value="P:tRNA wobble position uridine thiolation"/>
    <property type="evidence" value="ECO:0007669"/>
    <property type="project" value="TreeGrafter"/>
</dbReference>
<dbReference type="CDD" id="cd01998">
    <property type="entry name" value="MnmA_TRMU-like"/>
    <property type="match status" value="1"/>
</dbReference>
<dbReference type="FunFam" id="2.30.30.280:FF:000001">
    <property type="entry name" value="tRNA-specific 2-thiouridylase MnmA"/>
    <property type="match status" value="1"/>
</dbReference>
<dbReference type="FunFam" id="2.40.30.10:FF:000023">
    <property type="entry name" value="tRNA-specific 2-thiouridylase MnmA"/>
    <property type="match status" value="1"/>
</dbReference>
<dbReference type="FunFam" id="3.40.50.620:FF:000004">
    <property type="entry name" value="tRNA-specific 2-thiouridylase MnmA"/>
    <property type="match status" value="1"/>
</dbReference>
<dbReference type="Gene3D" id="2.30.30.280">
    <property type="entry name" value="Adenine nucleotide alpha hydrolases-like domains"/>
    <property type="match status" value="1"/>
</dbReference>
<dbReference type="Gene3D" id="3.40.50.620">
    <property type="entry name" value="HUPs"/>
    <property type="match status" value="1"/>
</dbReference>
<dbReference type="Gene3D" id="2.40.30.10">
    <property type="entry name" value="Translation factors"/>
    <property type="match status" value="1"/>
</dbReference>
<dbReference type="HAMAP" id="MF_00144">
    <property type="entry name" value="tRNA_thiouridyl_MnmA"/>
    <property type="match status" value="1"/>
</dbReference>
<dbReference type="InterPro" id="IPR004506">
    <property type="entry name" value="MnmA-like"/>
</dbReference>
<dbReference type="InterPro" id="IPR046885">
    <property type="entry name" value="MnmA-like_C"/>
</dbReference>
<dbReference type="InterPro" id="IPR046884">
    <property type="entry name" value="MnmA-like_central"/>
</dbReference>
<dbReference type="InterPro" id="IPR023382">
    <property type="entry name" value="MnmA-like_central_sf"/>
</dbReference>
<dbReference type="InterPro" id="IPR014729">
    <property type="entry name" value="Rossmann-like_a/b/a_fold"/>
</dbReference>
<dbReference type="NCBIfam" id="NF001138">
    <property type="entry name" value="PRK00143.1"/>
    <property type="match status" value="1"/>
</dbReference>
<dbReference type="NCBIfam" id="TIGR00420">
    <property type="entry name" value="trmU"/>
    <property type="match status" value="1"/>
</dbReference>
<dbReference type="PANTHER" id="PTHR11933:SF5">
    <property type="entry name" value="MITOCHONDRIAL TRNA-SPECIFIC 2-THIOURIDYLASE 1"/>
    <property type="match status" value="1"/>
</dbReference>
<dbReference type="PANTHER" id="PTHR11933">
    <property type="entry name" value="TRNA 5-METHYLAMINOMETHYL-2-THIOURIDYLATE -METHYLTRANSFERASE"/>
    <property type="match status" value="1"/>
</dbReference>
<dbReference type="Pfam" id="PF03054">
    <property type="entry name" value="tRNA_Me_trans"/>
    <property type="match status" value="1"/>
</dbReference>
<dbReference type="Pfam" id="PF20258">
    <property type="entry name" value="tRNA_Me_trans_C"/>
    <property type="match status" value="1"/>
</dbReference>
<dbReference type="Pfam" id="PF20259">
    <property type="entry name" value="tRNA_Me_trans_M"/>
    <property type="match status" value="1"/>
</dbReference>
<dbReference type="SUPFAM" id="SSF52402">
    <property type="entry name" value="Adenine nucleotide alpha hydrolases-like"/>
    <property type="match status" value="1"/>
</dbReference>